<protein>
    <recommendedName>
        <fullName evidence="1">L-rhamnose mutarotase</fullName>
        <ecNumber evidence="1">5.1.3.32</ecNumber>
    </recommendedName>
    <alternativeName>
        <fullName evidence="1">Rhamnose 1-epimerase</fullName>
    </alternativeName>
    <alternativeName>
        <fullName evidence="1">Type-3 mutarotase</fullName>
    </alternativeName>
</protein>
<reference key="1">
    <citation type="submission" date="2006-02" db="EMBL/GenBank/DDBJ databases">
        <title>Complete sequence of chromosome of Jannaschia sp. CCS1.</title>
        <authorList>
            <consortium name="US DOE Joint Genome Institute"/>
            <person name="Copeland A."/>
            <person name="Lucas S."/>
            <person name="Lapidus A."/>
            <person name="Barry K."/>
            <person name="Detter J.C."/>
            <person name="Glavina del Rio T."/>
            <person name="Hammon N."/>
            <person name="Israni S."/>
            <person name="Pitluck S."/>
            <person name="Brettin T."/>
            <person name="Bruce D."/>
            <person name="Han C."/>
            <person name="Tapia R."/>
            <person name="Gilna P."/>
            <person name="Chertkov O."/>
            <person name="Saunders E."/>
            <person name="Schmutz J."/>
            <person name="Larimer F."/>
            <person name="Land M."/>
            <person name="Kyrpides N."/>
            <person name="Lykidis A."/>
            <person name="Moran M.A."/>
            <person name="Belas R."/>
            <person name="Ye W."/>
            <person name="Buchan A."/>
            <person name="Gonzalez J.M."/>
            <person name="Schell M.A."/>
            <person name="Richardson P."/>
        </authorList>
    </citation>
    <scope>NUCLEOTIDE SEQUENCE [LARGE SCALE GENOMIC DNA]</scope>
    <source>
        <strain>CCS1</strain>
    </source>
</reference>
<dbReference type="EC" id="5.1.3.32" evidence="1"/>
<dbReference type="EMBL" id="CP000264">
    <property type="protein sequence ID" value="ABD55515.1"/>
    <property type="molecule type" value="Genomic_DNA"/>
</dbReference>
<dbReference type="RefSeq" id="WP_011455719.1">
    <property type="nucleotide sequence ID" value="NC_007802.1"/>
</dbReference>
<dbReference type="SMR" id="Q28P47"/>
<dbReference type="STRING" id="290400.Jann_2598"/>
<dbReference type="KEGG" id="jan:Jann_2598"/>
<dbReference type="eggNOG" id="COG3254">
    <property type="taxonomic scope" value="Bacteria"/>
</dbReference>
<dbReference type="HOGENOM" id="CLU_100689_2_0_5"/>
<dbReference type="UniPathway" id="UPA00125"/>
<dbReference type="Proteomes" id="UP000008326">
    <property type="component" value="Chromosome"/>
</dbReference>
<dbReference type="GO" id="GO:0005737">
    <property type="term" value="C:cytoplasm"/>
    <property type="evidence" value="ECO:0007669"/>
    <property type="project" value="UniProtKB-SubCell"/>
</dbReference>
<dbReference type="GO" id="GO:0062192">
    <property type="term" value="F:L-rhamnose mutarotase activity"/>
    <property type="evidence" value="ECO:0007669"/>
    <property type="project" value="UniProtKB-EC"/>
</dbReference>
<dbReference type="GO" id="GO:0019301">
    <property type="term" value="P:rhamnose catabolic process"/>
    <property type="evidence" value="ECO:0007669"/>
    <property type="project" value="TreeGrafter"/>
</dbReference>
<dbReference type="Gene3D" id="3.30.70.100">
    <property type="match status" value="1"/>
</dbReference>
<dbReference type="HAMAP" id="MF_01663">
    <property type="entry name" value="L_rham_rotase"/>
    <property type="match status" value="1"/>
</dbReference>
<dbReference type="InterPro" id="IPR011008">
    <property type="entry name" value="Dimeric_a/b-barrel"/>
</dbReference>
<dbReference type="InterPro" id="IPR013448">
    <property type="entry name" value="L-rhamnose_mutarotase"/>
</dbReference>
<dbReference type="InterPro" id="IPR008000">
    <property type="entry name" value="Rham/fucose_mutarotase"/>
</dbReference>
<dbReference type="NCBIfam" id="TIGR02625">
    <property type="entry name" value="YiiL_rotase"/>
    <property type="match status" value="1"/>
</dbReference>
<dbReference type="PANTHER" id="PTHR34389">
    <property type="entry name" value="L-RHAMNOSE MUTAROTASE"/>
    <property type="match status" value="1"/>
</dbReference>
<dbReference type="PANTHER" id="PTHR34389:SF2">
    <property type="entry name" value="L-RHAMNOSE MUTAROTASE"/>
    <property type="match status" value="1"/>
</dbReference>
<dbReference type="Pfam" id="PF05336">
    <property type="entry name" value="rhaM"/>
    <property type="match status" value="1"/>
</dbReference>
<dbReference type="SUPFAM" id="SSF54909">
    <property type="entry name" value="Dimeric alpha+beta barrel"/>
    <property type="match status" value="1"/>
</dbReference>
<feature type="chain" id="PRO_0000344580" description="L-rhamnose mutarotase">
    <location>
        <begin position="1"/>
        <end position="104"/>
    </location>
</feature>
<feature type="active site" description="Proton donor" evidence="1">
    <location>
        <position position="22"/>
    </location>
</feature>
<feature type="binding site" evidence="1">
    <location>
        <position position="18"/>
    </location>
    <ligand>
        <name>substrate</name>
    </ligand>
</feature>
<feature type="binding site" evidence="1">
    <location>
        <position position="41"/>
    </location>
    <ligand>
        <name>substrate</name>
    </ligand>
</feature>
<feature type="binding site" evidence="1">
    <location>
        <begin position="76"/>
        <end position="77"/>
    </location>
    <ligand>
        <name>substrate</name>
    </ligand>
</feature>
<proteinExistence type="inferred from homology"/>
<evidence type="ECO:0000255" key="1">
    <source>
        <dbReference type="HAMAP-Rule" id="MF_01663"/>
    </source>
</evidence>
<name>RHAM_JANSC</name>
<accession>Q28P47</accession>
<comment type="function">
    <text evidence="1">Involved in the anomeric conversion of L-rhamnose.</text>
</comment>
<comment type="catalytic activity">
    <reaction evidence="1">
        <text>alpha-L-rhamnose = beta-L-rhamnose</text>
        <dbReference type="Rhea" id="RHEA:25584"/>
        <dbReference type="ChEBI" id="CHEBI:27586"/>
        <dbReference type="ChEBI" id="CHEBI:27907"/>
        <dbReference type="EC" id="5.1.3.32"/>
    </reaction>
</comment>
<comment type="pathway">
    <text evidence="1">Carbohydrate metabolism; L-rhamnose metabolism.</text>
</comment>
<comment type="subunit">
    <text evidence="1">Homodimer.</text>
</comment>
<comment type="subcellular location">
    <subcellularLocation>
        <location evidence="1">Cytoplasm</location>
    </subcellularLocation>
</comment>
<comment type="similarity">
    <text evidence="1">Belongs to the rhamnose mutarotase family.</text>
</comment>
<organism>
    <name type="scientific">Jannaschia sp. (strain CCS1)</name>
    <dbReference type="NCBI Taxonomy" id="290400"/>
    <lineage>
        <taxon>Bacteria</taxon>
        <taxon>Pseudomonadati</taxon>
        <taxon>Pseudomonadota</taxon>
        <taxon>Alphaproteobacteria</taxon>
        <taxon>Rhodobacterales</taxon>
        <taxon>Roseobacteraceae</taxon>
        <taxon>Jannaschia</taxon>
    </lineage>
</organism>
<gene>
    <name evidence="1" type="primary">rhaM</name>
    <name type="ordered locus">Jann_2598</name>
</gene>
<sequence length="104" mass="12134">MEKYAFKMQLTPGCLAEYRKRHDEIWPELVDLLHQAGVSDYSIHLDEETGILFGVLWRTADHSMDALPDHPVMQRWWAHMADIMETHPDNEPKAVPLTPVFHMP</sequence>
<keyword id="KW-0119">Carbohydrate metabolism</keyword>
<keyword id="KW-0963">Cytoplasm</keyword>
<keyword id="KW-0413">Isomerase</keyword>
<keyword id="KW-1185">Reference proteome</keyword>
<keyword id="KW-0684">Rhamnose metabolism</keyword>